<gene>
    <name evidence="4" type="primary">B3GALT5-AS1</name>
    <name evidence="4" type="synonym">C21orf88</name>
</gene>
<proteinExistence type="uncertain"/>
<evidence type="ECO:0000256" key="1">
    <source>
        <dbReference type="SAM" id="MobiDB-lite"/>
    </source>
</evidence>
<evidence type="ECO:0000303" key="2">
    <source>
    </source>
</evidence>
<evidence type="ECO:0000305" key="3"/>
<evidence type="ECO:0000312" key="4">
    <source>
        <dbReference type="HGNC" id="HGNC:16424"/>
    </source>
</evidence>
<name>B3AS1_HUMAN</name>
<comment type="alternative products">
    <event type="alternative splicing"/>
    <isoform>
        <id>P59052-1</id>
        <name>1</name>
        <sequence type="displayed"/>
    </isoform>
    <isoform>
        <id>P59052-2</id>
        <name>2</name>
        <sequence type="described" ref="VSP_003836 VSP_003837"/>
    </isoform>
</comment>
<comment type="tissue specificity">
    <text>Ubiquitous.</text>
</comment>
<comment type="caution">
    <text evidence="3">Product of a dubious CDS prediction.</text>
</comment>
<feature type="chain" id="PRO_0000079538" description="Putative uncharacterized protein B3GALT5-AS1">
    <location>
        <begin position="1"/>
        <end position="145"/>
    </location>
</feature>
<feature type="region of interest" description="Disordered" evidence="1">
    <location>
        <begin position="1"/>
        <end position="41"/>
    </location>
</feature>
<feature type="region of interest" description="Disordered" evidence="1">
    <location>
        <begin position="122"/>
        <end position="145"/>
    </location>
</feature>
<feature type="compositionally biased region" description="Polar residues" evidence="1">
    <location>
        <begin position="20"/>
        <end position="34"/>
    </location>
</feature>
<feature type="compositionally biased region" description="Basic and acidic residues" evidence="1">
    <location>
        <begin position="134"/>
        <end position="145"/>
    </location>
</feature>
<feature type="splice variant" id="VSP_003836" description="In isoform 2." evidence="2">
    <original>GGQKSHGLCWLLC</original>
    <variation>NIQWHKRDQLGDN</variation>
    <location>
        <begin position="52"/>
        <end position="64"/>
    </location>
</feature>
<feature type="splice variant" id="VSP_003837" description="In isoform 2." evidence="2">
    <location>
        <begin position="65"/>
        <end position="145"/>
    </location>
</feature>
<feature type="sequence conflict" description="In Ref. 1; AAM53522 and 4; BC119737/BC119738." evidence="3" ref="1 4">
    <original>C</original>
    <variation>W</variation>
    <location>
        <position position="81"/>
    </location>
</feature>
<accession>P59052</accession>
<accession>Q0VDC1</accession>
<accession>Q547X5</accession>
<organism>
    <name type="scientific">Homo sapiens</name>
    <name type="common">Human</name>
    <dbReference type="NCBI Taxonomy" id="9606"/>
    <lineage>
        <taxon>Eukaryota</taxon>
        <taxon>Metazoa</taxon>
        <taxon>Chordata</taxon>
        <taxon>Craniata</taxon>
        <taxon>Vertebrata</taxon>
        <taxon>Euteleostomi</taxon>
        <taxon>Mammalia</taxon>
        <taxon>Eutheria</taxon>
        <taxon>Euarchontoglires</taxon>
        <taxon>Primates</taxon>
        <taxon>Haplorrhini</taxon>
        <taxon>Catarrhini</taxon>
        <taxon>Hominidae</taxon>
        <taxon>Homo</taxon>
    </lineage>
</organism>
<reference key="1">
    <citation type="journal article" date="2002" name="Genomics">
        <title>Nineteen additional unpredicted transcripts from human chromosome 21.</title>
        <authorList>
            <person name="Reymond A."/>
            <person name="Camargo A.A."/>
            <person name="Deutsch S."/>
            <person name="Stevenson B.J."/>
            <person name="Parmigiani R.B."/>
            <person name="Ucla C."/>
            <person name="Bettoni F."/>
            <person name="Rossier C."/>
            <person name="Lyle R."/>
            <person name="Guipponi M."/>
            <person name="de Souza S."/>
            <person name="Iseli C."/>
            <person name="Jongeneel C.V."/>
            <person name="Bucher P."/>
            <person name="Simpson A.J.G."/>
            <person name="Antonarakis S.E."/>
        </authorList>
    </citation>
    <scope>NUCLEOTIDE SEQUENCE [MRNA] (ISOFORMS 1 AND 2)</scope>
</reference>
<reference key="2">
    <citation type="journal article" date="2000" name="Nature">
        <title>The DNA sequence of human chromosome 21.</title>
        <authorList>
            <person name="Hattori M."/>
            <person name="Fujiyama A."/>
            <person name="Taylor T.D."/>
            <person name="Watanabe H."/>
            <person name="Yada T."/>
            <person name="Park H.-S."/>
            <person name="Toyoda A."/>
            <person name="Ishii K."/>
            <person name="Totoki Y."/>
            <person name="Choi D.-K."/>
            <person name="Groner Y."/>
            <person name="Soeda E."/>
            <person name="Ohki M."/>
            <person name="Takagi T."/>
            <person name="Sakaki Y."/>
            <person name="Taudien S."/>
            <person name="Blechschmidt K."/>
            <person name="Polley A."/>
            <person name="Menzel U."/>
            <person name="Delabar J."/>
            <person name="Kumpf K."/>
            <person name="Lehmann R."/>
            <person name="Patterson D."/>
            <person name="Reichwald K."/>
            <person name="Rump A."/>
            <person name="Schillhabel M."/>
            <person name="Schudy A."/>
            <person name="Zimmermann W."/>
            <person name="Rosenthal A."/>
            <person name="Kudoh J."/>
            <person name="Shibuya K."/>
            <person name="Kawasaki K."/>
            <person name="Asakawa S."/>
            <person name="Shintani A."/>
            <person name="Sasaki T."/>
            <person name="Nagamine K."/>
            <person name="Mitsuyama S."/>
            <person name="Antonarakis S.E."/>
            <person name="Minoshima S."/>
            <person name="Shimizu N."/>
            <person name="Nordsiek G."/>
            <person name="Hornischer K."/>
            <person name="Brandt P."/>
            <person name="Scharfe M."/>
            <person name="Schoen O."/>
            <person name="Desario A."/>
            <person name="Reichelt J."/>
            <person name="Kauer G."/>
            <person name="Bloecker H."/>
            <person name="Ramser J."/>
            <person name="Beck A."/>
            <person name="Klages S."/>
            <person name="Hennig S."/>
            <person name="Riesselmann L."/>
            <person name="Dagand E."/>
            <person name="Wehrmeyer S."/>
            <person name="Borzym K."/>
            <person name="Gardiner K."/>
            <person name="Nizetic D."/>
            <person name="Francis F."/>
            <person name="Lehrach H."/>
            <person name="Reinhardt R."/>
            <person name="Yaspo M.-L."/>
        </authorList>
    </citation>
    <scope>NUCLEOTIDE SEQUENCE [LARGE SCALE GENOMIC DNA]</scope>
</reference>
<reference key="3">
    <citation type="submission" date="2005-09" db="EMBL/GenBank/DDBJ databases">
        <authorList>
            <person name="Mural R.J."/>
            <person name="Istrail S."/>
            <person name="Sutton G.G."/>
            <person name="Florea L."/>
            <person name="Halpern A.L."/>
            <person name="Mobarry C.M."/>
            <person name="Lippert R."/>
            <person name="Walenz B."/>
            <person name="Shatkay H."/>
            <person name="Dew I."/>
            <person name="Miller J.R."/>
            <person name="Flanigan M.J."/>
            <person name="Edwards N.J."/>
            <person name="Bolanos R."/>
            <person name="Fasulo D."/>
            <person name="Halldorsson B.V."/>
            <person name="Hannenhalli S."/>
            <person name="Turner R."/>
            <person name="Yooseph S."/>
            <person name="Lu F."/>
            <person name="Nusskern D.R."/>
            <person name="Shue B.C."/>
            <person name="Zheng X.H."/>
            <person name="Zhong F."/>
            <person name="Delcher A.L."/>
            <person name="Huson D.H."/>
            <person name="Kravitz S.A."/>
            <person name="Mouchard L."/>
            <person name="Reinert K."/>
            <person name="Remington K.A."/>
            <person name="Clark A.G."/>
            <person name="Waterman M.S."/>
            <person name="Eichler E.E."/>
            <person name="Adams M.D."/>
            <person name="Hunkapiller M.W."/>
            <person name="Myers E.W."/>
            <person name="Venter J.C."/>
        </authorList>
    </citation>
    <scope>NUCLEOTIDE SEQUENCE [LARGE SCALE GENOMIC DNA]</scope>
</reference>
<reference key="4">
    <citation type="journal article" date="2004" name="Genome Res.">
        <title>The status, quality, and expansion of the NIH full-length cDNA project: the Mammalian Gene Collection (MGC).</title>
        <authorList>
            <consortium name="The MGC Project Team"/>
        </authorList>
    </citation>
    <scope>NUCLEOTIDE SEQUENCE [LARGE SCALE MRNA] (ISOFORM 1)</scope>
</reference>
<protein>
    <recommendedName>
        <fullName evidence="4">Putative uncharacterized protein B3GALT5-AS1</fullName>
    </recommendedName>
    <alternativeName>
        <fullName evidence="4">B3GALT5 antisense RNA 1</fullName>
    </alternativeName>
    <alternativeName>
        <fullName evidence="3">B3GALT5 antisense gene protein 1</fullName>
    </alternativeName>
</protein>
<sequence>MRRLRHREVRGPVLGHTATGGPQNGTSGCTTAPQQRPPPGTQGMLEQYLNRGGQKSHGLCWLLCFVSQGQNQDVISAELWCRIHVQAHWGCWQNSAVWGCRNEVLVSLLAVGQGLPSASGGRLPSLVHGPSHPDSQHPREVPLAL</sequence>
<keyword id="KW-0025">Alternative splicing</keyword>
<keyword id="KW-1185">Reference proteome</keyword>
<dbReference type="EMBL" id="AF426266">
    <property type="protein sequence ID" value="AAM53522.1"/>
    <property type="molecule type" value="mRNA"/>
</dbReference>
<dbReference type="EMBL" id="AF426267">
    <property type="protein sequence ID" value="AAM53523.1"/>
    <property type="molecule type" value="mRNA"/>
</dbReference>
<dbReference type="EMBL" id="AF064860">
    <property type="status" value="NOT_ANNOTATED_CDS"/>
    <property type="molecule type" value="Genomic_DNA"/>
</dbReference>
<dbReference type="EMBL" id="CH471079">
    <property type="protein sequence ID" value="EAX09636.1"/>
    <property type="molecule type" value="Genomic_DNA"/>
</dbReference>
<dbReference type="EMBL" id="BC119737">
    <property type="status" value="NOT_ANNOTATED_CDS"/>
    <property type="molecule type" value="mRNA"/>
</dbReference>
<dbReference type="EMBL" id="BC119738">
    <property type="status" value="NOT_ANNOTATED_CDS"/>
    <property type="molecule type" value="mRNA"/>
</dbReference>
<dbReference type="SMR" id="P59052"/>
<dbReference type="BioMuta" id="HGNC:16424"/>
<dbReference type="AGR" id="HGNC:16424"/>
<dbReference type="GeneCards" id="B3GALT5-AS1"/>
<dbReference type="HGNC" id="HGNC:16424">
    <property type="gene designation" value="B3GALT5-AS1"/>
</dbReference>
<dbReference type="neXtProt" id="NX_P59052"/>
<dbReference type="InParanoid" id="P59052"/>
<dbReference type="PAN-GO" id="P59052">
    <property type="GO annotations" value="0 GO annotations based on evolutionary models"/>
</dbReference>
<dbReference type="PhylomeDB" id="P59052"/>
<dbReference type="PathwayCommons" id="P59052"/>
<dbReference type="ChiTaRS" id="B3GALT5-AS1">
    <property type="organism name" value="human"/>
</dbReference>
<dbReference type="Pharos" id="P59052">
    <property type="development level" value="Tdark"/>
</dbReference>
<dbReference type="Proteomes" id="UP000005640">
    <property type="component" value="Unplaced"/>
</dbReference>
<dbReference type="RNAct" id="P59052">
    <property type="molecule type" value="protein"/>
</dbReference>